<proteinExistence type="inferred from homology"/>
<gene>
    <name evidence="2" type="primary">ahpD</name>
    <name type="ordered locus">BMEII0578</name>
</gene>
<evidence type="ECO:0000250" key="1"/>
<evidence type="ECO:0000255" key="2">
    <source>
        <dbReference type="HAMAP-Rule" id="MF_01676"/>
    </source>
</evidence>
<organism>
    <name type="scientific">Brucella melitensis biotype 1 (strain ATCC 23456 / CCUG 17765 / NCTC 10094 / 16M)</name>
    <dbReference type="NCBI Taxonomy" id="224914"/>
    <lineage>
        <taxon>Bacteria</taxon>
        <taxon>Pseudomonadati</taxon>
        <taxon>Pseudomonadota</taxon>
        <taxon>Alphaproteobacteria</taxon>
        <taxon>Hyphomicrobiales</taxon>
        <taxon>Brucellaceae</taxon>
        <taxon>Brucella/Ochrobactrum group</taxon>
        <taxon>Brucella</taxon>
    </lineage>
</organism>
<accession>Q8YCF2</accession>
<name>AHPD_BRUME</name>
<dbReference type="EC" id="1.11.1.28" evidence="2"/>
<dbReference type="EMBL" id="AE008918">
    <property type="protein sequence ID" value="AAL53820.1"/>
    <property type="molecule type" value="Genomic_DNA"/>
</dbReference>
<dbReference type="PIR" id="AI3581">
    <property type="entry name" value="AI3581"/>
</dbReference>
<dbReference type="RefSeq" id="WP_004682000.1">
    <property type="nucleotide sequence ID" value="NZ_GG703779.1"/>
</dbReference>
<dbReference type="SMR" id="Q8YCF2"/>
<dbReference type="PeroxiBase" id="4603">
    <property type="entry name" value="BmeAhpD"/>
</dbReference>
<dbReference type="KEGG" id="bme:BMEII0578"/>
<dbReference type="KEGG" id="bmel:DK63_2669"/>
<dbReference type="PATRIC" id="fig|224914.52.peg.2797"/>
<dbReference type="eggNOG" id="COG2128">
    <property type="taxonomic scope" value="Bacteria"/>
</dbReference>
<dbReference type="PhylomeDB" id="Q8YCF2"/>
<dbReference type="Proteomes" id="UP000000419">
    <property type="component" value="Chromosome II"/>
</dbReference>
<dbReference type="GO" id="GO:0008785">
    <property type="term" value="F:alkyl hydroperoxide reductase activity"/>
    <property type="evidence" value="ECO:0007669"/>
    <property type="project" value="UniProtKB-UniRule"/>
</dbReference>
<dbReference type="GO" id="GO:0015036">
    <property type="term" value="F:disulfide oxidoreductase activity"/>
    <property type="evidence" value="ECO:0007669"/>
    <property type="project" value="TreeGrafter"/>
</dbReference>
<dbReference type="GO" id="GO:0032843">
    <property type="term" value="F:hydroperoxide reductase activity"/>
    <property type="evidence" value="ECO:0007669"/>
    <property type="project" value="InterPro"/>
</dbReference>
<dbReference type="GO" id="GO:0051920">
    <property type="term" value="F:peroxiredoxin activity"/>
    <property type="evidence" value="ECO:0007669"/>
    <property type="project" value="InterPro"/>
</dbReference>
<dbReference type="GO" id="GO:0045454">
    <property type="term" value="P:cell redox homeostasis"/>
    <property type="evidence" value="ECO:0007669"/>
    <property type="project" value="TreeGrafter"/>
</dbReference>
<dbReference type="GO" id="GO:0006979">
    <property type="term" value="P:response to oxidative stress"/>
    <property type="evidence" value="ECO:0007669"/>
    <property type="project" value="InterPro"/>
</dbReference>
<dbReference type="Gene3D" id="1.20.1290.10">
    <property type="entry name" value="AhpD-like"/>
    <property type="match status" value="1"/>
</dbReference>
<dbReference type="HAMAP" id="MF_01676">
    <property type="entry name" value="AhpD"/>
    <property type="match status" value="1"/>
</dbReference>
<dbReference type="InterPro" id="IPR004674">
    <property type="entry name" value="AhpD"/>
</dbReference>
<dbReference type="InterPro" id="IPR029032">
    <property type="entry name" value="AhpD-like"/>
</dbReference>
<dbReference type="InterPro" id="IPR004675">
    <property type="entry name" value="AhpD_core"/>
</dbReference>
<dbReference type="InterPro" id="IPR003779">
    <property type="entry name" value="CMD-like"/>
</dbReference>
<dbReference type="NCBIfam" id="TIGR00777">
    <property type="entry name" value="ahpD"/>
    <property type="match status" value="1"/>
</dbReference>
<dbReference type="NCBIfam" id="TIGR00778">
    <property type="entry name" value="ahpD_dom"/>
    <property type="match status" value="1"/>
</dbReference>
<dbReference type="PANTHER" id="PTHR33930">
    <property type="entry name" value="ALKYL HYDROPEROXIDE REDUCTASE AHPD"/>
    <property type="match status" value="1"/>
</dbReference>
<dbReference type="PANTHER" id="PTHR33930:SF7">
    <property type="entry name" value="ALKYL HYDROPEROXIDE REDUCTASE AHPD"/>
    <property type="match status" value="1"/>
</dbReference>
<dbReference type="Pfam" id="PF02627">
    <property type="entry name" value="CMD"/>
    <property type="match status" value="1"/>
</dbReference>
<dbReference type="SUPFAM" id="SSF69118">
    <property type="entry name" value="AhpD-like"/>
    <property type="match status" value="1"/>
</dbReference>
<sequence>MSIDDLKSKIPDFAKDVRLNLSSMASDETLTPQQKYGLFVACGIASRNADVRKALVAEAAGKVDASVIQAAKAAASIMGMNNVYYRFVHLASNKDYRTMPARLRMNVISNPGVDKVDFELWSLAVSAINGCGMCIDAHEDVLRKANVTAEAIQAAVRFASIIQSAAIALEAADTE</sequence>
<feature type="chain" id="PRO_0000359480" description="Alkyl hydroperoxide reductase AhpD">
    <location>
        <begin position="1"/>
        <end position="175"/>
    </location>
</feature>
<feature type="active site" description="Proton donor" evidence="2">
    <location>
        <position position="131"/>
    </location>
</feature>
<feature type="active site" description="Cysteine sulfenic acid (-SOH) intermediate" evidence="2">
    <location>
        <position position="134"/>
    </location>
</feature>
<feature type="disulfide bond" evidence="1">
    <location>
        <begin position="131"/>
        <end position="134"/>
    </location>
</feature>
<feature type="disulfide bond" description="Interchain (with AhpC); in linked form" evidence="2">
    <location>
        <position position="134"/>
    </location>
</feature>
<comment type="function">
    <text evidence="2">Antioxidant protein with alkyl hydroperoxidase activity. Required for the reduction of the AhpC active site cysteine residues and for the regeneration of the AhpC enzyme activity.</text>
</comment>
<comment type="catalytic activity">
    <reaction evidence="2">
        <text>N(6)-[(R)-dihydrolipoyl]-L-lysyl-[lipoyl-carrier protein] + a hydroperoxide = N(6)-[(R)-lipoyl]-L-lysyl-[lipoyl-carrier protein] + an alcohol + H2O</text>
        <dbReference type="Rhea" id="RHEA:62636"/>
        <dbReference type="Rhea" id="RHEA-COMP:10502"/>
        <dbReference type="Rhea" id="RHEA-COMP:16355"/>
        <dbReference type="ChEBI" id="CHEBI:15377"/>
        <dbReference type="ChEBI" id="CHEBI:30879"/>
        <dbReference type="ChEBI" id="CHEBI:35924"/>
        <dbReference type="ChEBI" id="CHEBI:83099"/>
        <dbReference type="ChEBI" id="CHEBI:83100"/>
        <dbReference type="EC" id="1.11.1.28"/>
    </reaction>
</comment>
<comment type="similarity">
    <text evidence="2">Belongs to the AhpD family.</text>
</comment>
<keyword id="KW-0049">Antioxidant</keyword>
<keyword id="KW-1015">Disulfide bond</keyword>
<keyword id="KW-0560">Oxidoreductase</keyword>
<keyword id="KW-0575">Peroxidase</keyword>
<keyword id="KW-0676">Redox-active center</keyword>
<protein>
    <recommendedName>
        <fullName evidence="2">Alkyl hydroperoxide reductase AhpD</fullName>
        <ecNumber evidence="2">1.11.1.28</ecNumber>
    </recommendedName>
    <alternativeName>
        <fullName evidence="2">Alkylhydroperoxidase AhpD</fullName>
    </alternativeName>
</protein>
<reference key="1">
    <citation type="journal article" date="2002" name="Proc. Natl. Acad. Sci. U.S.A.">
        <title>The genome sequence of the facultative intracellular pathogen Brucella melitensis.</title>
        <authorList>
            <person name="DelVecchio V.G."/>
            <person name="Kapatral V."/>
            <person name="Redkar R.J."/>
            <person name="Patra G."/>
            <person name="Mujer C."/>
            <person name="Los T."/>
            <person name="Ivanova N."/>
            <person name="Anderson I."/>
            <person name="Bhattacharyya A."/>
            <person name="Lykidis A."/>
            <person name="Reznik G."/>
            <person name="Jablonski L."/>
            <person name="Larsen N."/>
            <person name="D'Souza M."/>
            <person name="Bernal A."/>
            <person name="Mazur M."/>
            <person name="Goltsman E."/>
            <person name="Selkov E."/>
            <person name="Elzer P.H."/>
            <person name="Hagius S."/>
            <person name="O'Callaghan D."/>
            <person name="Letesson J.-J."/>
            <person name="Haselkorn R."/>
            <person name="Kyrpides N.C."/>
            <person name="Overbeek R."/>
        </authorList>
    </citation>
    <scope>NUCLEOTIDE SEQUENCE [LARGE SCALE GENOMIC DNA]</scope>
    <source>
        <strain>ATCC 23456 / CCUG 17765 / NCTC 10094 / 16M</strain>
    </source>
</reference>